<protein>
    <recommendedName>
        <fullName>Mothers against decapentaplegic homolog 6</fullName>
        <shortName>MAD homolog 6</shortName>
        <shortName>Mothers against DPP homolog 6</shortName>
    </recommendedName>
    <alternativeName>
        <fullName>Mad homolog 7</fullName>
    </alternativeName>
    <alternativeName>
        <fullName>SMAD family member 6</fullName>
        <shortName>SMAD 6</shortName>
        <shortName>Smad6</shortName>
    </alternativeName>
</protein>
<proteinExistence type="evidence at protein level"/>
<evidence type="ECO:0000250" key="1"/>
<evidence type="ECO:0000250" key="2">
    <source>
        <dbReference type="UniProtKB" id="O43541"/>
    </source>
</evidence>
<evidence type="ECO:0000255" key="3">
    <source>
        <dbReference type="PROSITE-ProRule" id="PRU00438"/>
    </source>
</evidence>
<evidence type="ECO:0000255" key="4">
    <source>
        <dbReference type="PROSITE-ProRule" id="PRU00439"/>
    </source>
</evidence>
<evidence type="ECO:0000256" key="5">
    <source>
        <dbReference type="SAM" id="MobiDB-lite"/>
    </source>
</evidence>
<evidence type="ECO:0000269" key="6">
    <source>
    </source>
</evidence>
<evidence type="ECO:0000269" key="7">
    <source>
    </source>
</evidence>
<evidence type="ECO:0000269" key="8">
    <source>
    </source>
</evidence>
<evidence type="ECO:0000269" key="9">
    <source>
    </source>
</evidence>
<evidence type="ECO:0000269" key="10">
    <source>
    </source>
</evidence>
<evidence type="ECO:0000269" key="11">
    <source>
    </source>
</evidence>
<evidence type="ECO:0000305" key="12"/>
<keyword id="KW-1017">Isopeptide bond</keyword>
<keyword id="KW-0479">Metal-binding</keyword>
<keyword id="KW-0488">Methylation</keyword>
<keyword id="KW-0539">Nucleus</keyword>
<keyword id="KW-0597">Phosphoprotein</keyword>
<keyword id="KW-1185">Reference proteome</keyword>
<keyword id="KW-0804">Transcription</keyword>
<keyword id="KW-0805">Transcription regulation</keyword>
<keyword id="KW-0832">Ubl conjugation</keyword>
<keyword id="KW-0862">Zinc</keyword>
<reference key="1">
    <citation type="journal article" date="1997" name="Nature">
        <title>Smad6 inhibits signalling by the TGF-beta superfamily.</title>
        <authorList>
            <person name="Imamura T."/>
            <person name="Takase M."/>
            <person name="Nishihara A."/>
            <person name="Oeda E."/>
            <person name="Hanai J."/>
            <person name="Kawabata M."/>
            <person name="Miyazono K."/>
        </authorList>
    </citation>
    <scope>NUCLEOTIDE SEQUENCE [MRNA]</scope>
    <source>
        <tissue>Lung</tissue>
    </source>
</reference>
<reference key="2">
    <citation type="journal article" date="2005" name="Science">
        <title>The transcriptional landscape of the mammalian genome.</title>
        <authorList>
            <person name="Carninci P."/>
            <person name="Kasukawa T."/>
            <person name="Katayama S."/>
            <person name="Gough J."/>
            <person name="Frith M.C."/>
            <person name="Maeda N."/>
            <person name="Oyama R."/>
            <person name="Ravasi T."/>
            <person name="Lenhard B."/>
            <person name="Wells C."/>
            <person name="Kodzius R."/>
            <person name="Shimokawa K."/>
            <person name="Bajic V.B."/>
            <person name="Brenner S.E."/>
            <person name="Batalov S."/>
            <person name="Forrest A.R."/>
            <person name="Zavolan M."/>
            <person name="Davis M.J."/>
            <person name="Wilming L.G."/>
            <person name="Aidinis V."/>
            <person name="Allen J.E."/>
            <person name="Ambesi-Impiombato A."/>
            <person name="Apweiler R."/>
            <person name="Aturaliya R.N."/>
            <person name="Bailey T.L."/>
            <person name="Bansal M."/>
            <person name="Baxter L."/>
            <person name="Beisel K.W."/>
            <person name="Bersano T."/>
            <person name="Bono H."/>
            <person name="Chalk A.M."/>
            <person name="Chiu K.P."/>
            <person name="Choudhary V."/>
            <person name="Christoffels A."/>
            <person name="Clutterbuck D.R."/>
            <person name="Crowe M.L."/>
            <person name="Dalla E."/>
            <person name="Dalrymple B.P."/>
            <person name="de Bono B."/>
            <person name="Della Gatta G."/>
            <person name="di Bernardo D."/>
            <person name="Down T."/>
            <person name="Engstrom P."/>
            <person name="Fagiolini M."/>
            <person name="Faulkner G."/>
            <person name="Fletcher C.F."/>
            <person name="Fukushima T."/>
            <person name="Furuno M."/>
            <person name="Futaki S."/>
            <person name="Gariboldi M."/>
            <person name="Georgii-Hemming P."/>
            <person name="Gingeras T.R."/>
            <person name="Gojobori T."/>
            <person name="Green R.E."/>
            <person name="Gustincich S."/>
            <person name="Harbers M."/>
            <person name="Hayashi Y."/>
            <person name="Hensch T.K."/>
            <person name="Hirokawa N."/>
            <person name="Hill D."/>
            <person name="Huminiecki L."/>
            <person name="Iacono M."/>
            <person name="Ikeo K."/>
            <person name="Iwama A."/>
            <person name="Ishikawa T."/>
            <person name="Jakt M."/>
            <person name="Kanapin A."/>
            <person name="Katoh M."/>
            <person name="Kawasawa Y."/>
            <person name="Kelso J."/>
            <person name="Kitamura H."/>
            <person name="Kitano H."/>
            <person name="Kollias G."/>
            <person name="Krishnan S.P."/>
            <person name="Kruger A."/>
            <person name="Kummerfeld S.K."/>
            <person name="Kurochkin I.V."/>
            <person name="Lareau L.F."/>
            <person name="Lazarevic D."/>
            <person name="Lipovich L."/>
            <person name="Liu J."/>
            <person name="Liuni S."/>
            <person name="McWilliam S."/>
            <person name="Madan Babu M."/>
            <person name="Madera M."/>
            <person name="Marchionni L."/>
            <person name="Matsuda H."/>
            <person name="Matsuzawa S."/>
            <person name="Miki H."/>
            <person name="Mignone F."/>
            <person name="Miyake S."/>
            <person name="Morris K."/>
            <person name="Mottagui-Tabar S."/>
            <person name="Mulder N."/>
            <person name="Nakano N."/>
            <person name="Nakauchi H."/>
            <person name="Ng P."/>
            <person name="Nilsson R."/>
            <person name="Nishiguchi S."/>
            <person name="Nishikawa S."/>
            <person name="Nori F."/>
            <person name="Ohara O."/>
            <person name="Okazaki Y."/>
            <person name="Orlando V."/>
            <person name="Pang K.C."/>
            <person name="Pavan W.J."/>
            <person name="Pavesi G."/>
            <person name="Pesole G."/>
            <person name="Petrovsky N."/>
            <person name="Piazza S."/>
            <person name="Reed J."/>
            <person name="Reid J.F."/>
            <person name="Ring B.Z."/>
            <person name="Ringwald M."/>
            <person name="Rost B."/>
            <person name="Ruan Y."/>
            <person name="Salzberg S.L."/>
            <person name="Sandelin A."/>
            <person name="Schneider C."/>
            <person name="Schoenbach C."/>
            <person name="Sekiguchi K."/>
            <person name="Semple C.A."/>
            <person name="Seno S."/>
            <person name="Sessa L."/>
            <person name="Sheng Y."/>
            <person name="Shibata Y."/>
            <person name="Shimada H."/>
            <person name="Shimada K."/>
            <person name="Silva D."/>
            <person name="Sinclair B."/>
            <person name="Sperling S."/>
            <person name="Stupka E."/>
            <person name="Sugiura K."/>
            <person name="Sultana R."/>
            <person name="Takenaka Y."/>
            <person name="Taki K."/>
            <person name="Tammoja K."/>
            <person name="Tan S.L."/>
            <person name="Tang S."/>
            <person name="Taylor M.S."/>
            <person name="Tegner J."/>
            <person name="Teichmann S.A."/>
            <person name="Ueda H.R."/>
            <person name="van Nimwegen E."/>
            <person name="Verardo R."/>
            <person name="Wei C.L."/>
            <person name="Yagi K."/>
            <person name="Yamanishi H."/>
            <person name="Zabarovsky E."/>
            <person name="Zhu S."/>
            <person name="Zimmer A."/>
            <person name="Hide W."/>
            <person name="Bult C."/>
            <person name="Grimmond S.M."/>
            <person name="Teasdale R.D."/>
            <person name="Liu E.T."/>
            <person name="Brusic V."/>
            <person name="Quackenbush J."/>
            <person name="Wahlestedt C."/>
            <person name="Mattick J.S."/>
            <person name="Hume D.A."/>
            <person name="Kai C."/>
            <person name="Sasaki D."/>
            <person name="Tomaru Y."/>
            <person name="Fukuda S."/>
            <person name="Kanamori-Katayama M."/>
            <person name="Suzuki M."/>
            <person name="Aoki J."/>
            <person name="Arakawa T."/>
            <person name="Iida J."/>
            <person name="Imamura K."/>
            <person name="Itoh M."/>
            <person name="Kato T."/>
            <person name="Kawaji H."/>
            <person name="Kawagashira N."/>
            <person name="Kawashima T."/>
            <person name="Kojima M."/>
            <person name="Kondo S."/>
            <person name="Konno H."/>
            <person name="Nakano K."/>
            <person name="Ninomiya N."/>
            <person name="Nishio T."/>
            <person name="Okada M."/>
            <person name="Plessy C."/>
            <person name="Shibata K."/>
            <person name="Shiraki T."/>
            <person name="Suzuki S."/>
            <person name="Tagami M."/>
            <person name="Waki K."/>
            <person name="Watahiki A."/>
            <person name="Okamura-Oho Y."/>
            <person name="Suzuki H."/>
            <person name="Kawai J."/>
            <person name="Hayashizaki Y."/>
        </authorList>
    </citation>
    <scope>NUCLEOTIDE SEQUENCE [LARGE SCALE MRNA] OF 174-495</scope>
    <source>
        <strain>C57BL/6J</strain>
        <tissue>Lung</tissue>
    </source>
</reference>
<reference key="3">
    <citation type="journal article" date="2003" name="EMBO J.">
        <title>Arkadia amplifies TGF-beta superfamily signaling through degradation of Smad7.</title>
        <authorList>
            <person name="Koinuma D."/>
            <person name="Shinozaki M."/>
            <person name="Komuro A."/>
            <person name="Goto K."/>
            <person name="Saitoh M."/>
            <person name="Hanyu A."/>
            <person name="Ebina M."/>
            <person name="Nukiwa T."/>
            <person name="Miyazawa K."/>
            <person name="Imamura T."/>
            <person name="Miyazono K."/>
        </authorList>
    </citation>
    <scope>INTERACTION WITH RNF111</scope>
</reference>
<reference key="4">
    <citation type="journal article" date="2004" name="Oncogene">
        <title>Negative regulation of transforming growth factor-beta (TGF-beta) signaling by WW domain-containing protein 1 (WWP1).</title>
        <authorList>
            <person name="Komuro A."/>
            <person name="Imamura T."/>
            <person name="Saitoh M."/>
            <person name="Yoshida Y."/>
            <person name="Yamori T."/>
            <person name="Miyazono K."/>
            <person name="Miyazawa K."/>
        </authorList>
    </citation>
    <scope>INTERACTION WITH WWP1</scope>
    <scope>UBIQUITINATION</scope>
</reference>
<reference key="5">
    <citation type="journal article" date="2005" name="Biochem. J.">
        <title>NEDD4-2 (neural precursor cell expressed, developmentally down-regulated 4-2) negatively regulates TGF-beta (transforming growth factor-beta) signalling by inducing ubiquitin-mediated degradation of Smad2 and TGF-beta type I receptor.</title>
        <authorList>
            <person name="Kuratomi G."/>
            <person name="Komuro A."/>
            <person name="Goto K."/>
            <person name="Shinozaki M."/>
            <person name="Miyazawa K."/>
            <person name="Miyazono K."/>
            <person name="Imamura T."/>
        </authorList>
    </citation>
    <scope>INTERACTION WITH NEDD4L</scope>
</reference>
<reference key="6">
    <citation type="journal article" date="2006" name="Nat. Immunol.">
        <title>Smad6 negatively regulates interleukin 1-receptor-Toll-like receptor signaling through direct interaction with the adapter Pellino-1.</title>
        <authorList>
            <person name="Choi K.C."/>
            <person name="Lee Y.S."/>
            <person name="Lim S."/>
            <person name="Choi H.K."/>
            <person name="Lee C.H."/>
            <person name="Lee E.K."/>
            <person name="Hong S."/>
            <person name="Kim I.H."/>
            <person name="Kim S.J."/>
            <person name="Park S.H."/>
        </authorList>
    </citation>
    <scope>FUNCTION</scope>
    <scope>INTERACTION WITH PELI1</scope>
    <scope>INDUCTION</scope>
</reference>
<reference key="7">
    <citation type="journal article" date="2013" name="Mol. Cell">
        <title>Arginine Methylation Initiates BMP-Induced Smad Signaling.</title>
        <authorList>
            <person name="Xu J."/>
            <person name="Wang A.H."/>
            <person name="Oses-Prieto J."/>
            <person name="Makhijani K."/>
            <person name="Katsuno Y."/>
            <person name="Pei M."/>
            <person name="Yan L."/>
            <person name="Zheng Y.G."/>
            <person name="Burlingame A."/>
            <person name="Bruckner K."/>
            <person name="Derynck R."/>
        </authorList>
    </citation>
    <scope>METHYLATION AT ARG-74 AND ARG-81</scope>
    <scope>MUTAGENESIS OF ARG-74</scope>
</reference>
<reference key="8">
    <citation type="journal article" date="2013" name="PLoS Biol.">
        <title>Rnf165/Ark2C enhances BMP-Smad signaling to mediate motor axon extension.</title>
        <authorList>
            <person name="Kelly C.E."/>
            <person name="Thymiakou E."/>
            <person name="Dixon J.E."/>
            <person name="Tanaka S."/>
            <person name="Godwin J."/>
            <person name="Episkopou V."/>
        </authorList>
    </citation>
    <scope>UBIQUITINATION</scope>
</reference>
<comment type="function">
    <text evidence="2 9">Transforming growth factor-beta superfamily receptors signaling occurs through the Smad family of intracellular mediators. SMAD6 is an inhibitory Smad (i-Smad) that negatively regulates signaling downstream of type I transforming growth factor-beta (By similarity). Acts as a mediator of TGF-beta and BMP anti-inflammatory activities. Suppresses IL1R-TLR signaling through its direct interaction with PEL1, preventing NF-kappa-B activation, nuclear transport and NF-kappa-B-mediated expression of pro-inflammatory genes (PubMed:16951688). Blocks the BMP-SMAD1 signaling pathway by competing with SMAD4 for receptor-activated SMAD1-binding. Binds to regulatory elements in target promoter regions (By similarity).</text>
</comment>
<comment type="subunit">
    <text evidence="1 2 6 7 8 9">Interacts with NEDD4L. Interacts with WWP1. Interacts with STAMBP and PRKX (By similarity). Interacts with RNF111 and AXIN1. Interacts with TGF-beta type I receptor superfamily members, including ACVR1B, BMPR1B and TGFBR1. In response to BMP2 treatment, interacts with SMAD1; this interaction may inhibit SMAD1-binding to SMAD4. Interacts with HOXC8 and HOXC9 (By similarity). Interacts with PELI1; this interaction interferes with PELI1 complex formation with TRAF6, IRAK1, IRAK4 and MYD88 in response to IL1B and hence negatively regulates IL1R-TLR signaling. Interacts with TSC22D1/TSC-22 (By similarity).</text>
</comment>
<comment type="interaction">
    <interactant intactId="EBI-4321242">
        <id>O35182</id>
    </interactant>
    <interactant intactId="EBI-2365912">
        <id>O35625</id>
        <label>Axin1</label>
    </interactant>
    <organismsDiffer>false</organismsDiffer>
    <experiments>2</experiments>
</comment>
<comment type="interaction">
    <interactant intactId="EBI-4321242">
        <id>O35182</id>
    </interactant>
    <interactant intactId="EBI-7107883">
        <id>P36898</id>
        <label>Bmpr1b</label>
    </interactant>
    <organismsDiffer>false</organismsDiffer>
    <experiments>2</experiments>
</comment>
<comment type="interaction">
    <interactant intactId="EBI-4321242">
        <id>O35182</id>
    </interactant>
    <interactant intactId="EBI-519055">
        <id>Q9JIF0</id>
        <label>Prmt1</label>
    </interactant>
    <organismsDiffer>false</organismsDiffer>
    <experiments>3</experiments>
</comment>
<comment type="interaction">
    <interactant intactId="EBI-4321242">
        <id>O35182</id>
    </interactant>
    <interactant intactId="EBI-2339946">
        <id>Q9C0C9</id>
        <label>UBE2O</label>
    </interactant>
    <organismsDiffer>true</organismsDiffer>
    <experiments>4</experiments>
</comment>
<comment type="subcellular location">
    <subcellularLocation>
        <location evidence="1">Nucleus</location>
    </subcellularLocation>
</comment>
<comment type="tissue specificity">
    <text>Ubiquitous in various organs, with higher levels in lung.</text>
</comment>
<comment type="induction">
    <text evidence="9">By TGF-beta and BMP4.</text>
</comment>
<comment type="PTM">
    <text evidence="2 7 10">Monoubiquitinated at Lys-174 by the E2/E3 hybrid ubiquitin-protein ligase UBE2O, leading to reduced binding affinity for the activated BMP type I receptor ACVR1/ALK2, thereby enhancing BMP7 and regulating adipocyte differentiation (By similarity). Ubiquitinated by WWP1 (PubMed:15221015). Ubiquitinated by ARK2C, promoting proteasomal degradation, leading to enhance the BMP-Smad signaling (PubMed:23610558).</text>
</comment>
<comment type="PTM">
    <text evidence="11">Arginine methylation by PRMT1, which is recruited by BMPR2, initiates BMP-Induced signaling and induces dissociation from the BMPR1B receptor at the cell surface leading to derepress downstream Smad1/Smad5 signaling.</text>
</comment>
<comment type="PTM">
    <text evidence="2">Phosphorylated by BMP type 1 receptor kinase and by PRKX.</text>
</comment>
<comment type="similarity">
    <text evidence="12">Belongs to the dwarfin/SMAD family.</text>
</comment>
<gene>
    <name type="primary">Smad6</name>
    <name type="synonym">Madh6</name>
    <name type="synonym">Madh7</name>
    <name type="synonym">Msmad6</name>
</gene>
<sequence>MFRSKRSGLVRRLWRSRVVPDREEGSGGGGGVDEDGSLGSRAEPAPRAREGGGCSRSEVRSVAPRRPRDAVGPRGAAIAGRRRRTGGLPRPVSESGAGAGGSPLDVAEPGGPGWLPESDCETVTCCLFSERDAAGAPRDSGDPQARQSPEPEEGGGPRSREARSRLLLLEQELKTVTYSLLKRLKERSLDTLLEAVESRGGVPGGCVLVPRADLRLGGQPAPPQLLLGRLFRWPDLQHAVELKPLCGCHSFTAAADGPTVCCNPYHFSRLCGPESPPPPYSRLSPPDQYKPLDLSDSTLSYTETEATNSLITAPGEFSDASMSPDATKPSHWCSVAYWEHRTRVGRLYAVYDQAVSIFYDLPQGSGFCLGQLNLEQRSESVRRTRSKIGFGILLSKEPDGVWAYNRGEHPIFVNSPTLDAPGGRALVVRKVPPGYSIKVFDFERSGLLQHADAAHGPYDPHSVRISFAKGWGPCYSRQFITSCPCWLEILLNNHR</sequence>
<organism>
    <name type="scientific">Mus musculus</name>
    <name type="common">Mouse</name>
    <dbReference type="NCBI Taxonomy" id="10090"/>
    <lineage>
        <taxon>Eukaryota</taxon>
        <taxon>Metazoa</taxon>
        <taxon>Chordata</taxon>
        <taxon>Craniata</taxon>
        <taxon>Vertebrata</taxon>
        <taxon>Euteleostomi</taxon>
        <taxon>Mammalia</taxon>
        <taxon>Eutheria</taxon>
        <taxon>Euarchontoglires</taxon>
        <taxon>Glires</taxon>
        <taxon>Rodentia</taxon>
        <taxon>Myomorpha</taxon>
        <taxon>Muroidea</taxon>
        <taxon>Muridae</taxon>
        <taxon>Murinae</taxon>
        <taxon>Mus</taxon>
        <taxon>Mus</taxon>
    </lineage>
</organism>
<dbReference type="EMBL" id="AF010133">
    <property type="protein sequence ID" value="AAB81351.1"/>
    <property type="molecule type" value="mRNA"/>
</dbReference>
<dbReference type="EMBL" id="AK004671">
    <property type="protein sequence ID" value="BAB23460.1"/>
    <property type="molecule type" value="mRNA"/>
</dbReference>
<dbReference type="CCDS" id="CCDS23273.1"/>
<dbReference type="RefSeq" id="NP_032568.3">
    <property type="nucleotide sequence ID" value="NM_008542.3"/>
</dbReference>
<dbReference type="RefSeq" id="XP_006510885.1">
    <property type="nucleotide sequence ID" value="XM_006510822.4"/>
</dbReference>
<dbReference type="SMR" id="O35182"/>
<dbReference type="BioGRID" id="201279">
    <property type="interactions" value="12"/>
</dbReference>
<dbReference type="FunCoup" id="O35182">
    <property type="interactions" value="2035"/>
</dbReference>
<dbReference type="IntAct" id="O35182">
    <property type="interactions" value="189"/>
</dbReference>
<dbReference type="MINT" id="O35182"/>
<dbReference type="STRING" id="10090.ENSMUSP00000036285"/>
<dbReference type="GlyGen" id="O35182">
    <property type="glycosylation" value="1 site"/>
</dbReference>
<dbReference type="iPTMnet" id="O35182"/>
<dbReference type="PhosphoSitePlus" id="O35182"/>
<dbReference type="PaxDb" id="10090-ENSMUSP00000036285"/>
<dbReference type="ProteomicsDB" id="261255"/>
<dbReference type="Antibodypedia" id="13795">
    <property type="antibodies" value="569 antibodies from 37 providers"/>
</dbReference>
<dbReference type="DNASU" id="17130"/>
<dbReference type="Ensembl" id="ENSMUST00000041029.6">
    <property type="protein sequence ID" value="ENSMUSP00000036285.6"/>
    <property type="gene ID" value="ENSMUSG00000036867.8"/>
</dbReference>
<dbReference type="GeneID" id="17130"/>
<dbReference type="KEGG" id="mmu:17130"/>
<dbReference type="UCSC" id="uc009qbk.2">
    <property type="organism name" value="mouse"/>
</dbReference>
<dbReference type="AGR" id="MGI:1336883"/>
<dbReference type="CTD" id="4091"/>
<dbReference type="MGI" id="MGI:1336883">
    <property type="gene designation" value="Smad6"/>
</dbReference>
<dbReference type="VEuPathDB" id="HostDB:ENSMUSG00000036867"/>
<dbReference type="eggNOG" id="KOG3701">
    <property type="taxonomic scope" value="Eukaryota"/>
</dbReference>
<dbReference type="GeneTree" id="ENSGT00940000158146"/>
<dbReference type="HOGENOM" id="CLU_026736_2_1_1"/>
<dbReference type="InParanoid" id="O35182"/>
<dbReference type="OMA" id="LLVCKVY"/>
<dbReference type="OrthoDB" id="5946219at2759"/>
<dbReference type="PhylomeDB" id="O35182"/>
<dbReference type="TreeFam" id="TF314923"/>
<dbReference type="Reactome" id="R-MMU-201451">
    <property type="pathway name" value="Signaling by BMP"/>
</dbReference>
<dbReference type="BioGRID-ORCS" id="17130">
    <property type="hits" value="4 hits in 82 CRISPR screens"/>
</dbReference>
<dbReference type="ChiTaRS" id="Smad6">
    <property type="organism name" value="mouse"/>
</dbReference>
<dbReference type="PRO" id="PR:O35182"/>
<dbReference type="Proteomes" id="UP000000589">
    <property type="component" value="Chromosome 9"/>
</dbReference>
<dbReference type="RNAct" id="O35182">
    <property type="molecule type" value="protein"/>
</dbReference>
<dbReference type="Bgee" id="ENSMUSG00000036867">
    <property type="expression patterns" value="Expressed in right lung and 189 other cell types or tissues"/>
</dbReference>
<dbReference type="ExpressionAtlas" id="O35182">
    <property type="expression patterns" value="baseline and differential"/>
</dbReference>
<dbReference type="GO" id="GO:0036064">
    <property type="term" value="C:ciliary basal body"/>
    <property type="evidence" value="ECO:0007669"/>
    <property type="project" value="Ensembl"/>
</dbReference>
<dbReference type="GO" id="GO:0005829">
    <property type="term" value="C:cytosol"/>
    <property type="evidence" value="ECO:0007669"/>
    <property type="project" value="Ensembl"/>
</dbReference>
<dbReference type="GO" id="GO:0005794">
    <property type="term" value="C:Golgi apparatus"/>
    <property type="evidence" value="ECO:0007669"/>
    <property type="project" value="Ensembl"/>
</dbReference>
<dbReference type="GO" id="GO:0016604">
    <property type="term" value="C:nuclear body"/>
    <property type="evidence" value="ECO:0007669"/>
    <property type="project" value="Ensembl"/>
</dbReference>
<dbReference type="GO" id="GO:0005634">
    <property type="term" value="C:nucleus"/>
    <property type="evidence" value="ECO:0000250"/>
    <property type="project" value="UniProtKB"/>
</dbReference>
<dbReference type="GO" id="GO:0032991">
    <property type="term" value="C:protein-containing complex"/>
    <property type="evidence" value="ECO:0000266"/>
    <property type="project" value="MGI"/>
</dbReference>
<dbReference type="GO" id="GO:0005667">
    <property type="term" value="C:transcription regulator complex"/>
    <property type="evidence" value="ECO:0007669"/>
    <property type="project" value="InterPro"/>
</dbReference>
<dbReference type="GO" id="GO:0003682">
    <property type="term" value="F:chromatin binding"/>
    <property type="evidence" value="ECO:0000250"/>
    <property type="project" value="UniProtKB"/>
</dbReference>
<dbReference type="GO" id="GO:0070410">
    <property type="term" value="F:co-SMAD binding"/>
    <property type="evidence" value="ECO:0007669"/>
    <property type="project" value="Ensembl"/>
</dbReference>
<dbReference type="GO" id="GO:0070411">
    <property type="term" value="F:I-SMAD binding"/>
    <property type="evidence" value="ECO:0007669"/>
    <property type="project" value="Ensembl"/>
</dbReference>
<dbReference type="GO" id="GO:0042802">
    <property type="term" value="F:identical protein binding"/>
    <property type="evidence" value="ECO:0007669"/>
    <property type="project" value="Ensembl"/>
</dbReference>
<dbReference type="GO" id="GO:0046872">
    <property type="term" value="F:metal ion binding"/>
    <property type="evidence" value="ECO:0007669"/>
    <property type="project" value="UniProtKB-KW"/>
</dbReference>
<dbReference type="GO" id="GO:0140311">
    <property type="term" value="F:protein sequestering activity"/>
    <property type="evidence" value="ECO:0007669"/>
    <property type="project" value="Ensembl"/>
</dbReference>
<dbReference type="GO" id="GO:0070412">
    <property type="term" value="F:R-SMAD binding"/>
    <property type="evidence" value="ECO:0007669"/>
    <property type="project" value="Ensembl"/>
</dbReference>
<dbReference type="GO" id="GO:0000976">
    <property type="term" value="F:transcription cis-regulatory region binding"/>
    <property type="evidence" value="ECO:0000250"/>
    <property type="project" value="UniProtKB"/>
</dbReference>
<dbReference type="GO" id="GO:0140416">
    <property type="term" value="F:transcription regulator inhibitor activity"/>
    <property type="evidence" value="ECO:0007669"/>
    <property type="project" value="Ensembl"/>
</dbReference>
<dbReference type="GO" id="GO:0070698">
    <property type="term" value="F:type I activin receptor binding"/>
    <property type="evidence" value="ECO:0007669"/>
    <property type="project" value="Ensembl"/>
</dbReference>
<dbReference type="GO" id="GO:0034713">
    <property type="term" value="F:type I transforming growth factor beta receptor binding"/>
    <property type="evidence" value="ECO:0007669"/>
    <property type="project" value="Ensembl"/>
</dbReference>
<dbReference type="GO" id="GO:0031625">
    <property type="term" value="F:ubiquitin protein ligase binding"/>
    <property type="evidence" value="ECO:0007669"/>
    <property type="project" value="Ensembl"/>
</dbReference>
<dbReference type="GO" id="GO:0035904">
    <property type="term" value="P:aorta development"/>
    <property type="evidence" value="ECO:0000315"/>
    <property type="project" value="MGI"/>
</dbReference>
<dbReference type="GO" id="GO:0003180">
    <property type="term" value="P:aortic valve morphogenesis"/>
    <property type="evidence" value="ECO:0007669"/>
    <property type="project" value="Ensembl"/>
</dbReference>
<dbReference type="GO" id="GO:0030509">
    <property type="term" value="P:BMP signaling pathway"/>
    <property type="evidence" value="ECO:0000250"/>
    <property type="project" value="UniProtKB"/>
</dbReference>
<dbReference type="GO" id="GO:0060948">
    <property type="term" value="P:cardiac vascular smooth muscle cell development"/>
    <property type="evidence" value="ECO:0000304"/>
    <property type="project" value="DFLAT"/>
</dbReference>
<dbReference type="GO" id="GO:0031589">
    <property type="term" value="P:cell-substrate adhesion"/>
    <property type="evidence" value="ECO:0000250"/>
    <property type="project" value="UniProtKB"/>
</dbReference>
<dbReference type="GO" id="GO:0060976">
    <property type="term" value="P:coronary vasculature development"/>
    <property type="evidence" value="ECO:0000315"/>
    <property type="project" value="MGI"/>
</dbReference>
<dbReference type="GO" id="GO:0060977">
    <property type="term" value="P:coronary vasculature morphogenesis"/>
    <property type="evidence" value="ECO:0000304"/>
    <property type="project" value="DFLAT"/>
</dbReference>
<dbReference type="GO" id="GO:0045444">
    <property type="term" value="P:fat cell differentiation"/>
    <property type="evidence" value="ECO:0000250"/>
    <property type="project" value="UniProtKB"/>
</dbReference>
<dbReference type="GO" id="GO:0003170">
    <property type="term" value="P:heart valve development"/>
    <property type="evidence" value="ECO:0000315"/>
    <property type="project" value="MGI"/>
</dbReference>
<dbReference type="GO" id="GO:0006955">
    <property type="term" value="P:immune response"/>
    <property type="evidence" value="ECO:0007669"/>
    <property type="project" value="Ensembl"/>
</dbReference>
<dbReference type="GO" id="GO:0003183">
    <property type="term" value="P:mitral valve morphogenesis"/>
    <property type="evidence" value="ECO:0000315"/>
    <property type="project" value="BHF-UCL"/>
</dbReference>
<dbReference type="GO" id="GO:0032926">
    <property type="term" value="P:negative regulation of activin receptor signaling pathway"/>
    <property type="evidence" value="ECO:0007669"/>
    <property type="project" value="Ensembl"/>
</dbReference>
<dbReference type="GO" id="GO:0043066">
    <property type="term" value="P:negative regulation of apoptotic process"/>
    <property type="evidence" value="ECO:0007669"/>
    <property type="project" value="Ensembl"/>
</dbReference>
<dbReference type="GO" id="GO:0030514">
    <property type="term" value="P:negative regulation of BMP signaling pathway"/>
    <property type="evidence" value="ECO:0000250"/>
    <property type="project" value="UniProtKB"/>
</dbReference>
<dbReference type="GO" id="GO:0008285">
    <property type="term" value="P:negative regulation of cell population proliferation"/>
    <property type="evidence" value="ECO:0007669"/>
    <property type="project" value="Ensembl"/>
</dbReference>
<dbReference type="GO" id="GO:0030279">
    <property type="term" value="P:negative regulation of ossification"/>
    <property type="evidence" value="ECO:0000315"/>
    <property type="project" value="BHF-UCL"/>
</dbReference>
<dbReference type="GO" id="GO:0045668">
    <property type="term" value="P:negative regulation of osteoblast differentiation"/>
    <property type="evidence" value="ECO:0007669"/>
    <property type="project" value="Ensembl"/>
</dbReference>
<dbReference type="GO" id="GO:0060392">
    <property type="term" value="P:negative regulation of SMAD protein signal transduction"/>
    <property type="evidence" value="ECO:0007669"/>
    <property type="project" value="Ensembl"/>
</dbReference>
<dbReference type="GO" id="GO:0030512">
    <property type="term" value="P:negative regulation of transforming growth factor beta receptor signaling pathway"/>
    <property type="evidence" value="ECO:0007669"/>
    <property type="project" value="Ensembl"/>
</dbReference>
<dbReference type="GO" id="GO:0003148">
    <property type="term" value="P:outflow tract septum morphogenesis"/>
    <property type="evidence" value="ECO:0000315"/>
    <property type="project" value="BHF-UCL"/>
</dbReference>
<dbReference type="GO" id="GO:1902895">
    <property type="term" value="P:positive regulation of miRNA transcription"/>
    <property type="evidence" value="ECO:0000315"/>
    <property type="project" value="BHF-UCL"/>
</dbReference>
<dbReference type="GO" id="GO:0045907">
    <property type="term" value="P:positive regulation of vasoconstriction"/>
    <property type="evidence" value="ECO:0000304"/>
    <property type="project" value="DFLAT"/>
</dbReference>
<dbReference type="GO" id="GO:0003184">
    <property type="term" value="P:pulmonary valve morphogenesis"/>
    <property type="evidence" value="ECO:0000315"/>
    <property type="project" value="BHF-UCL"/>
</dbReference>
<dbReference type="GO" id="GO:0043627">
    <property type="term" value="P:response to estrogen"/>
    <property type="evidence" value="ECO:0007669"/>
    <property type="project" value="Ensembl"/>
</dbReference>
<dbReference type="GO" id="GO:0034616">
    <property type="term" value="P:response to laminar fluid shear stress"/>
    <property type="evidence" value="ECO:0007669"/>
    <property type="project" value="Ensembl"/>
</dbReference>
<dbReference type="GO" id="GO:0032496">
    <property type="term" value="P:response to lipopolysaccharide"/>
    <property type="evidence" value="ECO:0007669"/>
    <property type="project" value="Ensembl"/>
</dbReference>
<dbReference type="GO" id="GO:0001657">
    <property type="term" value="P:ureteric bud development"/>
    <property type="evidence" value="ECO:0000270"/>
    <property type="project" value="UniProtKB"/>
</dbReference>
<dbReference type="GO" id="GO:0042310">
    <property type="term" value="P:vasoconstriction"/>
    <property type="evidence" value="ECO:0000304"/>
    <property type="project" value="DFLAT"/>
</dbReference>
<dbReference type="GO" id="GO:0003281">
    <property type="term" value="P:ventricular septum development"/>
    <property type="evidence" value="ECO:0000315"/>
    <property type="project" value="MGI"/>
</dbReference>
<dbReference type="GO" id="GO:0007352">
    <property type="term" value="P:zygotic specification of dorsal/ventral axis"/>
    <property type="evidence" value="ECO:0007669"/>
    <property type="project" value="Ensembl"/>
</dbReference>
<dbReference type="CDD" id="cd10493">
    <property type="entry name" value="MH1_SMAD_6"/>
    <property type="match status" value="1"/>
</dbReference>
<dbReference type="CDD" id="cd10499">
    <property type="entry name" value="MH2_SMAD_6"/>
    <property type="match status" value="1"/>
</dbReference>
<dbReference type="FunFam" id="2.60.200.10:FF:000004">
    <property type="entry name" value="Mothers against decapentaplegic homolog"/>
    <property type="match status" value="1"/>
</dbReference>
<dbReference type="FunFam" id="3.90.520.10:FF:000003">
    <property type="entry name" value="Mothers against decapentaplegic homolog"/>
    <property type="match status" value="1"/>
</dbReference>
<dbReference type="Gene3D" id="2.60.200.10">
    <property type="match status" value="1"/>
</dbReference>
<dbReference type="Gene3D" id="3.90.520.10">
    <property type="entry name" value="SMAD MH1 domain"/>
    <property type="match status" value="1"/>
</dbReference>
<dbReference type="InterPro" id="IPR013790">
    <property type="entry name" value="Dwarfin"/>
</dbReference>
<dbReference type="InterPro" id="IPR003619">
    <property type="entry name" value="MAD_homology1_Dwarfin-type"/>
</dbReference>
<dbReference type="InterPro" id="IPR013019">
    <property type="entry name" value="MAD_homology_MH1"/>
</dbReference>
<dbReference type="InterPro" id="IPR017855">
    <property type="entry name" value="SMAD-like_dom_sf"/>
</dbReference>
<dbReference type="InterPro" id="IPR001132">
    <property type="entry name" value="SMAD_dom_Dwarfin-type"/>
</dbReference>
<dbReference type="InterPro" id="IPR008984">
    <property type="entry name" value="SMAD_FHA_dom_sf"/>
</dbReference>
<dbReference type="InterPro" id="IPR036578">
    <property type="entry name" value="SMAD_MH1_sf"/>
</dbReference>
<dbReference type="PANTHER" id="PTHR13703:SF28">
    <property type="entry name" value="MOTHERS AGAINST DECAPENTAPLEGIC HOMOLOG 6"/>
    <property type="match status" value="1"/>
</dbReference>
<dbReference type="PANTHER" id="PTHR13703">
    <property type="entry name" value="SMAD"/>
    <property type="match status" value="1"/>
</dbReference>
<dbReference type="Pfam" id="PF03165">
    <property type="entry name" value="MH1"/>
    <property type="match status" value="1"/>
</dbReference>
<dbReference type="Pfam" id="PF03166">
    <property type="entry name" value="MH2"/>
    <property type="match status" value="1"/>
</dbReference>
<dbReference type="SMART" id="SM00523">
    <property type="entry name" value="DWA"/>
    <property type="match status" value="1"/>
</dbReference>
<dbReference type="SMART" id="SM00524">
    <property type="entry name" value="DWB"/>
    <property type="match status" value="1"/>
</dbReference>
<dbReference type="SUPFAM" id="SSF56366">
    <property type="entry name" value="SMAD MH1 domain"/>
    <property type="match status" value="1"/>
</dbReference>
<dbReference type="SUPFAM" id="SSF49879">
    <property type="entry name" value="SMAD/FHA domain"/>
    <property type="match status" value="1"/>
</dbReference>
<dbReference type="PROSITE" id="PS51075">
    <property type="entry name" value="MH1"/>
    <property type="match status" value="1"/>
</dbReference>
<dbReference type="PROSITE" id="PS51076">
    <property type="entry name" value="MH2"/>
    <property type="match status" value="1"/>
</dbReference>
<feature type="chain" id="PRO_0000090870" description="Mothers against decapentaplegic homolog 6">
    <location>
        <begin position="1"/>
        <end position="495"/>
    </location>
</feature>
<feature type="domain" description="MH1" evidence="3">
    <location>
        <begin position="149"/>
        <end position="276"/>
    </location>
</feature>
<feature type="domain" description="MH2" evidence="4">
    <location>
        <begin position="332"/>
        <end position="495"/>
    </location>
</feature>
<feature type="region of interest" description="Disordered" evidence="5">
    <location>
        <begin position="1"/>
        <end position="115"/>
    </location>
</feature>
<feature type="region of interest" description="Disordered" evidence="5">
    <location>
        <begin position="133"/>
        <end position="161"/>
    </location>
</feature>
<feature type="compositionally biased region" description="Basic residues" evidence="5">
    <location>
        <begin position="1"/>
        <end position="15"/>
    </location>
</feature>
<feature type="binding site" evidence="1">
    <location>
        <position position="206"/>
    </location>
    <ligand>
        <name>Zn(2+)</name>
        <dbReference type="ChEBI" id="CHEBI:29105"/>
    </ligand>
</feature>
<feature type="binding site" evidence="1">
    <location>
        <position position="248"/>
    </location>
    <ligand>
        <name>Zn(2+)</name>
        <dbReference type="ChEBI" id="CHEBI:29105"/>
    </ligand>
</feature>
<feature type="binding site" evidence="1">
    <location>
        <position position="261"/>
    </location>
    <ligand>
        <name>Zn(2+)</name>
        <dbReference type="ChEBI" id="CHEBI:29105"/>
    </ligand>
</feature>
<feature type="binding site" evidence="1">
    <location>
        <position position="266"/>
    </location>
    <ligand>
        <name>Zn(2+)</name>
        <dbReference type="ChEBI" id="CHEBI:29105"/>
    </ligand>
</feature>
<feature type="modified residue" description="Dimethylated arginine; alternate" evidence="11">
    <location>
        <position position="74"/>
    </location>
</feature>
<feature type="modified residue" description="Omega-N-methylarginine; alternate" evidence="11">
    <location>
        <position position="74"/>
    </location>
</feature>
<feature type="modified residue" description="Dimethylated arginine; alternate" evidence="11">
    <location>
        <position position="81"/>
    </location>
</feature>
<feature type="modified residue" description="Omega-N-methylarginine; alternate" evidence="11">
    <location>
        <position position="81"/>
    </location>
</feature>
<feature type="modified residue" description="Phosphoserine; by PRKX; in vitro" evidence="2 4">
    <location>
        <position position="436"/>
    </location>
</feature>
<feature type="cross-link" description="Glycyl lysine isopeptide (Lys-Gly) (interchain with G-Cter in ubiquitin)" evidence="2">
    <location>
        <position position="174"/>
    </location>
</feature>
<feature type="mutagenesis site" description="Strongly decreased methylation." evidence="11">
    <original>R</original>
    <variation>A</variation>
    <location>
        <position position="74"/>
    </location>
</feature>
<feature type="sequence conflict" description="In Ref. 2; BAB23460." evidence="12" ref="2">
    <original>VT</original>
    <variation>AQ</variation>
    <location>
        <begin position="176"/>
        <end position="177"/>
    </location>
</feature>
<accession>O35182</accession>
<accession>Q9CW62</accession>
<name>SMAD6_MOUSE</name>